<reference key="1">
    <citation type="journal article" date="2001" name="Science">
        <title>Comparative genomics of Listeria species.</title>
        <authorList>
            <person name="Glaser P."/>
            <person name="Frangeul L."/>
            <person name="Buchrieser C."/>
            <person name="Rusniok C."/>
            <person name="Amend A."/>
            <person name="Baquero F."/>
            <person name="Berche P."/>
            <person name="Bloecker H."/>
            <person name="Brandt P."/>
            <person name="Chakraborty T."/>
            <person name="Charbit A."/>
            <person name="Chetouani F."/>
            <person name="Couve E."/>
            <person name="de Daruvar A."/>
            <person name="Dehoux P."/>
            <person name="Domann E."/>
            <person name="Dominguez-Bernal G."/>
            <person name="Duchaud E."/>
            <person name="Durant L."/>
            <person name="Dussurget O."/>
            <person name="Entian K.-D."/>
            <person name="Fsihi H."/>
            <person name="Garcia-del Portillo F."/>
            <person name="Garrido P."/>
            <person name="Gautier L."/>
            <person name="Goebel W."/>
            <person name="Gomez-Lopez N."/>
            <person name="Hain T."/>
            <person name="Hauf J."/>
            <person name="Jackson D."/>
            <person name="Jones L.-M."/>
            <person name="Kaerst U."/>
            <person name="Kreft J."/>
            <person name="Kuhn M."/>
            <person name="Kunst F."/>
            <person name="Kurapkat G."/>
            <person name="Madueno E."/>
            <person name="Maitournam A."/>
            <person name="Mata Vicente J."/>
            <person name="Ng E."/>
            <person name="Nedjari H."/>
            <person name="Nordsiek G."/>
            <person name="Novella S."/>
            <person name="de Pablos B."/>
            <person name="Perez-Diaz J.-C."/>
            <person name="Purcell R."/>
            <person name="Remmel B."/>
            <person name="Rose M."/>
            <person name="Schlueter T."/>
            <person name="Simoes N."/>
            <person name="Tierrez A."/>
            <person name="Vazquez-Boland J.-A."/>
            <person name="Voss H."/>
            <person name="Wehland J."/>
            <person name="Cossart P."/>
        </authorList>
    </citation>
    <scope>NUCLEOTIDE SEQUENCE [LARGE SCALE GENOMIC DNA]</scope>
    <source>
        <strain>ATCC BAA-679 / EGD-e</strain>
    </source>
</reference>
<sequence>MNKLNEALKKAERIVFLTGAGVSVPSGIPDYRSKNGLYAGMSSPEYMLSHTCLVREPEKFYQFVTENMYYPNAVPNVIHKKMAEIETEKDVTIITQNIDGLHEKAGSKKVVNFHGSLYHCYCQNCGMTVTAKDYLKSDIHTDCGGVIRPDVVLYEEAISESAIDQSLTAIRKADLIVIVGTSFRVSPFCNLTDYRNKKARIFAVNKERISLPYPFEMMESDAVKVFEEI</sequence>
<proteinExistence type="inferred from homology"/>
<gene>
    <name evidence="1" type="primary">cobB</name>
    <name type="ordered locus">lmo2739</name>
</gene>
<evidence type="ECO:0000255" key="1">
    <source>
        <dbReference type="HAMAP-Rule" id="MF_01968"/>
    </source>
</evidence>
<evidence type="ECO:0000255" key="2">
    <source>
        <dbReference type="PROSITE-ProRule" id="PRU00236"/>
    </source>
</evidence>
<keyword id="KW-0963">Cytoplasm</keyword>
<keyword id="KW-0520">NAD</keyword>
<keyword id="KW-1185">Reference proteome</keyword>
<keyword id="KW-0808">Transferase</keyword>
<comment type="function">
    <text evidence="1">NAD-dependent protein deacetylase which modulates the activities of several enzymes which are inactive in their acetylated form.</text>
</comment>
<comment type="catalytic activity">
    <reaction evidence="1">
        <text>N(6)-acetyl-L-lysyl-[protein] + NAD(+) + H2O = 2''-O-acetyl-ADP-D-ribose + nicotinamide + L-lysyl-[protein]</text>
        <dbReference type="Rhea" id="RHEA:43636"/>
        <dbReference type="Rhea" id="RHEA-COMP:9752"/>
        <dbReference type="Rhea" id="RHEA-COMP:10731"/>
        <dbReference type="ChEBI" id="CHEBI:15377"/>
        <dbReference type="ChEBI" id="CHEBI:17154"/>
        <dbReference type="ChEBI" id="CHEBI:29969"/>
        <dbReference type="ChEBI" id="CHEBI:57540"/>
        <dbReference type="ChEBI" id="CHEBI:61930"/>
        <dbReference type="ChEBI" id="CHEBI:83767"/>
        <dbReference type="EC" id="2.3.1.286"/>
    </reaction>
</comment>
<comment type="subcellular location">
    <subcellularLocation>
        <location evidence="1">Cytoplasm</location>
    </subcellularLocation>
</comment>
<comment type="similarity">
    <text evidence="1">Belongs to the sirtuin family. Class U subfamily.</text>
</comment>
<accession>Q8Y3U2</accession>
<organism>
    <name type="scientific">Listeria monocytogenes serovar 1/2a (strain ATCC BAA-679 / EGD-e)</name>
    <dbReference type="NCBI Taxonomy" id="169963"/>
    <lineage>
        <taxon>Bacteria</taxon>
        <taxon>Bacillati</taxon>
        <taxon>Bacillota</taxon>
        <taxon>Bacilli</taxon>
        <taxon>Bacillales</taxon>
        <taxon>Listeriaceae</taxon>
        <taxon>Listeria</taxon>
    </lineage>
</organism>
<feature type="chain" id="PRO_0000110327" description="NAD-dependent protein deacetylase">
    <location>
        <begin position="1"/>
        <end position="229"/>
    </location>
</feature>
<feature type="domain" description="Deacetylase sirtuin-type" evidence="2">
    <location>
        <begin position="1"/>
        <end position="229"/>
    </location>
</feature>
<feature type="active site" description="Proton acceptor" evidence="1">
    <location>
        <position position="114"/>
    </location>
</feature>
<feature type="binding site" evidence="1">
    <location>
        <position position="20"/>
    </location>
    <ligand>
        <name>NAD(+)</name>
        <dbReference type="ChEBI" id="CHEBI:57540"/>
    </ligand>
</feature>
<feature type="binding site" evidence="1">
    <location>
        <position position="32"/>
    </location>
    <ligand>
        <name>NAD(+)</name>
        <dbReference type="ChEBI" id="CHEBI:57540"/>
    </ligand>
</feature>
<feature type="binding site" evidence="1">
    <location>
        <position position="96"/>
    </location>
    <ligand>
        <name>NAD(+)</name>
        <dbReference type="ChEBI" id="CHEBI:57540"/>
    </ligand>
</feature>
<feature type="binding site" evidence="1">
    <location>
        <position position="98"/>
    </location>
    <ligand>
        <name>NAD(+)</name>
        <dbReference type="ChEBI" id="CHEBI:57540"/>
    </ligand>
</feature>
<feature type="binding site" evidence="1">
    <location>
        <position position="98"/>
    </location>
    <ligand>
        <name>nicotinamide</name>
        <dbReference type="ChEBI" id="CHEBI:17154"/>
    </ligand>
</feature>
<feature type="binding site" evidence="1">
    <location>
        <position position="99"/>
    </location>
    <ligand>
        <name>NAD(+)</name>
        <dbReference type="ChEBI" id="CHEBI:57540"/>
    </ligand>
</feature>
<feature type="binding site" evidence="1">
    <location>
        <position position="99"/>
    </location>
    <ligand>
        <name>nicotinamide</name>
        <dbReference type="ChEBI" id="CHEBI:17154"/>
    </ligand>
</feature>
<feature type="binding site" evidence="1">
    <location>
        <position position="114"/>
    </location>
    <ligand>
        <name>NAD(+)</name>
        <dbReference type="ChEBI" id="CHEBI:57540"/>
    </ligand>
</feature>
<feature type="binding site" evidence="1">
    <location>
        <position position="181"/>
    </location>
    <ligand>
        <name>NAD(+)</name>
        <dbReference type="ChEBI" id="CHEBI:57540"/>
    </ligand>
</feature>
<feature type="binding site" evidence="1">
    <location>
        <position position="182"/>
    </location>
    <ligand>
        <name>NAD(+)</name>
        <dbReference type="ChEBI" id="CHEBI:57540"/>
    </ligand>
</feature>
<feature type="binding site" evidence="1">
    <location>
        <position position="205"/>
    </location>
    <ligand>
        <name>NAD(+)</name>
        <dbReference type="ChEBI" id="CHEBI:57540"/>
    </ligand>
</feature>
<feature type="binding site" evidence="1">
    <location>
        <position position="223"/>
    </location>
    <ligand>
        <name>NAD(+)</name>
        <dbReference type="ChEBI" id="CHEBI:57540"/>
    </ligand>
</feature>
<dbReference type="EC" id="2.3.1.286" evidence="1"/>
<dbReference type="EMBL" id="AL591984">
    <property type="protein sequence ID" value="CAD00952.1"/>
    <property type="molecule type" value="Genomic_DNA"/>
</dbReference>
<dbReference type="PIR" id="AB1417">
    <property type="entry name" value="AB1417"/>
</dbReference>
<dbReference type="RefSeq" id="NP_466261.1">
    <property type="nucleotide sequence ID" value="NC_003210.1"/>
</dbReference>
<dbReference type="RefSeq" id="WP_009931961.1">
    <property type="nucleotide sequence ID" value="NZ_CP149495.1"/>
</dbReference>
<dbReference type="SMR" id="Q8Y3U2"/>
<dbReference type="STRING" id="169963.gene:17595456"/>
<dbReference type="PaxDb" id="169963-lmo2739"/>
<dbReference type="DNASU" id="987067"/>
<dbReference type="EnsemblBacteria" id="CAD00952">
    <property type="protein sequence ID" value="CAD00952"/>
    <property type="gene ID" value="CAD00952"/>
</dbReference>
<dbReference type="GeneID" id="987067"/>
<dbReference type="KEGG" id="lmo:lmo2739"/>
<dbReference type="PATRIC" id="fig|169963.11.peg.2805"/>
<dbReference type="eggNOG" id="COG0846">
    <property type="taxonomic scope" value="Bacteria"/>
</dbReference>
<dbReference type="HOGENOM" id="CLU_023643_3_0_9"/>
<dbReference type="OrthoDB" id="9800582at2"/>
<dbReference type="PhylomeDB" id="Q8Y3U2"/>
<dbReference type="BioCyc" id="LMON169963:LMO2739-MONOMER"/>
<dbReference type="Proteomes" id="UP000000817">
    <property type="component" value="Chromosome"/>
</dbReference>
<dbReference type="GO" id="GO:0005737">
    <property type="term" value="C:cytoplasm"/>
    <property type="evidence" value="ECO:0007669"/>
    <property type="project" value="UniProtKB-SubCell"/>
</dbReference>
<dbReference type="GO" id="GO:0017136">
    <property type="term" value="F:histone deacetylase activity, NAD-dependent"/>
    <property type="evidence" value="ECO:0000318"/>
    <property type="project" value="GO_Central"/>
</dbReference>
<dbReference type="GO" id="GO:0070403">
    <property type="term" value="F:NAD+ binding"/>
    <property type="evidence" value="ECO:0000318"/>
    <property type="project" value="GO_Central"/>
</dbReference>
<dbReference type="CDD" id="cd01411">
    <property type="entry name" value="SIR2H"/>
    <property type="match status" value="1"/>
</dbReference>
<dbReference type="Gene3D" id="3.30.1600.10">
    <property type="entry name" value="SIR2/SIRT2 'Small Domain"/>
    <property type="match status" value="1"/>
</dbReference>
<dbReference type="Gene3D" id="3.40.50.1220">
    <property type="entry name" value="TPP-binding domain"/>
    <property type="match status" value="1"/>
</dbReference>
<dbReference type="HAMAP" id="MF_01968">
    <property type="entry name" value="Sirtuin_ClassU"/>
    <property type="match status" value="1"/>
</dbReference>
<dbReference type="InterPro" id="IPR029035">
    <property type="entry name" value="DHS-like_NAD/FAD-binding_dom"/>
</dbReference>
<dbReference type="InterPro" id="IPR050134">
    <property type="entry name" value="NAD-dep_sirtuin_deacylases"/>
</dbReference>
<dbReference type="InterPro" id="IPR003000">
    <property type="entry name" value="Sirtuin"/>
</dbReference>
<dbReference type="InterPro" id="IPR026591">
    <property type="entry name" value="Sirtuin_cat_small_dom_sf"/>
</dbReference>
<dbReference type="InterPro" id="IPR028628">
    <property type="entry name" value="Sirtuin_class_U"/>
</dbReference>
<dbReference type="InterPro" id="IPR026590">
    <property type="entry name" value="Ssirtuin_cat_dom"/>
</dbReference>
<dbReference type="NCBIfam" id="NF001752">
    <property type="entry name" value="PRK00481.1-1"/>
    <property type="match status" value="1"/>
</dbReference>
<dbReference type="PANTHER" id="PTHR11085:SF4">
    <property type="entry name" value="NAD-DEPENDENT PROTEIN DEACYLASE"/>
    <property type="match status" value="1"/>
</dbReference>
<dbReference type="PANTHER" id="PTHR11085">
    <property type="entry name" value="NAD-DEPENDENT PROTEIN DEACYLASE SIRTUIN-5, MITOCHONDRIAL-RELATED"/>
    <property type="match status" value="1"/>
</dbReference>
<dbReference type="Pfam" id="PF02146">
    <property type="entry name" value="SIR2"/>
    <property type="match status" value="1"/>
</dbReference>
<dbReference type="SUPFAM" id="SSF52467">
    <property type="entry name" value="DHS-like NAD/FAD-binding domain"/>
    <property type="match status" value="1"/>
</dbReference>
<dbReference type="PROSITE" id="PS50305">
    <property type="entry name" value="SIRTUIN"/>
    <property type="match status" value="1"/>
</dbReference>
<name>NPD_LISMO</name>
<protein>
    <recommendedName>
        <fullName evidence="1">NAD-dependent protein deacetylase</fullName>
        <ecNumber evidence="1">2.3.1.286</ecNumber>
    </recommendedName>
    <alternativeName>
        <fullName evidence="1">Regulatory protein SIR2 homolog</fullName>
    </alternativeName>
</protein>